<sequence length="12" mass="1378">RGSNLTHPLRNI</sequence>
<reference key="1">
    <citation type="journal article" date="2009" name="Anim. Reprod. Sci.">
        <title>Identification of multiple pregnancy-associated glycoproteins (PAGs) purified from the European bison (Eb; Bison bonasus L.) placentas.</title>
        <authorList>
            <person name="Kiewisz J."/>
            <person name="Melo de Sousa N."/>
            <person name="Beckers J.-F.M.P."/>
            <person name="Panasiewicz G."/>
            <person name="Gizejewski Z."/>
            <person name="Szafranska B."/>
        </authorList>
    </citation>
    <scope>PROTEIN SEQUENCE</scope>
    <scope>TISSUE SPECIFICITY</scope>
    <scope>DEVELOPMENTAL STAGE</scope>
    <scope>GLYCOSYLATION AT ASN-4</scope>
    <source>
        <tissue>Placenta</tissue>
    </source>
</reference>
<feature type="chain" id="PRO_0000314069" description="Pregnancy-associated glycoprotein 55E">
    <location>
        <begin position="1"/>
        <end position="12" status="greater than"/>
    </location>
</feature>
<feature type="glycosylation site" description="N-linked (GlcNAc...) asparagine" evidence="2">
    <location>
        <position position="4"/>
    </location>
</feature>
<feature type="non-terminal residue" evidence="3">
    <location>
        <position position="12"/>
    </location>
</feature>
<organism>
    <name type="scientific">Bison bonasus</name>
    <name type="common">European bison</name>
    <dbReference type="NCBI Taxonomy" id="9902"/>
    <lineage>
        <taxon>Eukaryota</taxon>
        <taxon>Metazoa</taxon>
        <taxon>Chordata</taxon>
        <taxon>Craniata</taxon>
        <taxon>Vertebrata</taxon>
        <taxon>Euteleostomi</taxon>
        <taxon>Mammalia</taxon>
        <taxon>Eutheria</taxon>
        <taxon>Laurasiatheria</taxon>
        <taxon>Artiodactyla</taxon>
        <taxon>Ruminantia</taxon>
        <taxon>Pecora</taxon>
        <taxon>Bovidae</taxon>
        <taxon>Bovinae</taxon>
        <taxon>Bison</taxon>
    </lineage>
</organism>
<comment type="subcellular location">
    <subcellularLocation>
        <location evidence="4">Secreted</location>
        <location evidence="4">Extracellular space</location>
    </subcellularLocation>
</comment>
<comment type="tissue specificity">
    <text evidence="2">Chorionic epithelium (trophectoderm) and placental cotyledons.</text>
</comment>
<comment type="developmental stage">
    <text evidence="2">Expressed at 60 dpc.</text>
</comment>
<comment type="miscellaneous">
    <text evidence="2">On the 2D-gel the determined pI of this protein is: 5.5, its MW is: 55 kDa.</text>
</comment>
<comment type="similarity">
    <text evidence="1">Belongs to the peptidase A1 family.</text>
</comment>
<evidence type="ECO:0000255" key="1"/>
<evidence type="ECO:0000269" key="2">
    <source>
    </source>
</evidence>
<evidence type="ECO:0000303" key="3">
    <source>
    </source>
</evidence>
<evidence type="ECO:0000305" key="4"/>
<dbReference type="EC" id="3.4.23.-"/>
<dbReference type="iPTMnet" id="P85323"/>
<dbReference type="GO" id="GO:0005576">
    <property type="term" value="C:extracellular region"/>
    <property type="evidence" value="ECO:0007669"/>
    <property type="project" value="UniProtKB-SubCell"/>
</dbReference>
<dbReference type="GO" id="GO:0004190">
    <property type="term" value="F:aspartic-type endopeptidase activity"/>
    <property type="evidence" value="ECO:0007669"/>
    <property type="project" value="UniProtKB-KW"/>
</dbReference>
<dbReference type="GO" id="GO:0006508">
    <property type="term" value="P:proteolysis"/>
    <property type="evidence" value="ECO:0007669"/>
    <property type="project" value="UniProtKB-KW"/>
</dbReference>
<proteinExistence type="evidence at protein level"/>
<accession>P85323</accession>
<keyword id="KW-0064">Aspartyl protease</keyword>
<keyword id="KW-0903">Direct protein sequencing</keyword>
<keyword id="KW-0325">Glycoprotein</keyword>
<keyword id="KW-0378">Hydrolase</keyword>
<keyword id="KW-0645">Protease</keyword>
<keyword id="KW-0964">Secreted</keyword>
<name>PA55E_BISBO</name>
<protein>
    <recommendedName>
        <fullName>Pregnancy-associated glycoprotein 55E</fullName>
        <ecNumber>3.4.23.-</ecNumber>
    </recommendedName>
    <alternativeName>
        <fullName>EbPAG-E 55 kDa</fullName>
    </alternativeName>
</protein>